<accession>Q7MZ27</accession>
<name>AMPA_PHOLL</name>
<evidence type="ECO:0000255" key="1">
    <source>
        <dbReference type="HAMAP-Rule" id="MF_00181"/>
    </source>
</evidence>
<sequence length="506" mass="54943">MEFSVKSGSPEKQRSACIIVGVFEPRRLSSIAEQLDKISDGYISALLRRGELEGKVGQSLLLHHVPNVLSERILLIGCGKERELDERQYKQIIQKTINTLNETGSMEAVCFLTELHVKGRNNYWKVRQAVETAKESLYAFNQLKSNKNELRRPLRKMVFNVPTRRELTSGERAIQHGLAIAAGIKAAKDLSNMPPNICNAAYLASQARQLADSANSHITTKVIGEEQMKELGMNAYLAVGQGSQNESLMSVMEYKGSSDKHAKPIILVGKGLTFDSGGISIKSAGGMDEMKYDMCGAATVYGVMRVVSELQLPLNVIGVMAGCENMPGGRAYRPGDILTTLSGQTVEVLNTDAEGRLVLCDALTYVERFDPELVIDIATLTGACITALGNHYSGLLSNHNPLAHELLNASEQSGDRAWRLPMTDEFFEQIDSNFADLANTGGSGGGAITAACFLSRFATKYHWAHLDIAGTAWRSGKTKGATGRPVALLSQFLLNRAGSAGINNDD</sequence>
<gene>
    <name evidence="1" type="primary">pepA</name>
    <name type="ordered locus">plu4481</name>
</gene>
<organism>
    <name type="scientific">Photorhabdus laumondii subsp. laumondii (strain DSM 15139 / CIP 105565 / TT01)</name>
    <name type="common">Photorhabdus luminescens subsp. laumondii</name>
    <dbReference type="NCBI Taxonomy" id="243265"/>
    <lineage>
        <taxon>Bacteria</taxon>
        <taxon>Pseudomonadati</taxon>
        <taxon>Pseudomonadota</taxon>
        <taxon>Gammaproteobacteria</taxon>
        <taxon>Enterobacterales</taxon>
        <taxon>Morganellaceae</taxon>
        <taxon>Photorhabdus</taxon>
    </lineage>
</organism>
<dbReference type="EC" id="3.4.11.1" evidence="1"/>
<dbReference type="EC" id="3.4.11.10" evidence="1"/>
<dbReference type="EMBL" id="BX571874">
    <property type="protein sequence ID" value="CAE16853.1"/>
    <property type="molecule type" value="Genomic_DNA"/>
</dbReference>
<dbReference type="RefSeq" id="WP_011148562.1">
    <property type="nucleotide sequence ID" value="NC_005126.1"/>
</dbReference>
<dbReference type="SMR" id="Q7MZ27"/>
<dbReference type="STRING" id="243265.plu4481"/>
<dbReference type="MEROPS" id="M17.003"/>
<dbReference type="GeneID" id="48850687"/>
<dbReference type="KEGG" id="plu:plu4481"/>
<dbReference type="eggNOG" id="COG0260">
    <property type="taxonomic scope" value="Bacteria"/>
</dbReference>
<dbReference type="HOGENOM" id="CLU_013734_2_2_6"/>
<dbReference type="OrthoDB" id="9809354at2"/>
<dbReference type="Proteomes" id="UP000002514">
    <property type="component" value="Chromosome"/>
</dbReference>
<dbReference type="GO" id="GO:0005737">
    <property type="term" value="C:cytoplasm"/>
    <property type="evidence" value="ECO:0007669"/>
    <property type="project" value="UniProtKB-SubCell"/>
</dbReference>
<dbReference type="GO" id="GO:0030145">
    <property type="term" value="F:manganese ion binding"/>
    <property type="evidence" value="ECO:0007669"/>
    <property type="project" value="UniProtKB-UniRule"/>
</dbReference>
<dbReference type="GO" id="GO:0070006">
    <property type="term" value="F:metalloaminopeptidase activity"/>
    <property type="evidence" value="ECO:0007669"/>
    <property type="project" value="InterPro"/>
</dbReference>
<dbReference type="GO" id="GO:0006508">
    <property type="term" value="P:proteolysis"/>
    <property type="evidence" value="ECO:0007669"/>
    <property type="project" value="UniProtKB-KW"/>
</dbReference>
<dbReference type="CDD" id="cd00433">
    <property type="entry name" value="Peptidase_M17"/>
    <property type="match status" value="1"/>
</dbReference>
<dbReference type="FunFam" id="3.40.220.10:FF:000001">
    <property type="entry name" value="Probable cytosol aminopeptidase"/>
    <property type="match status" value="1"/>
</dbReference>
<dbReference type="FunFam" id="3.40.630.10:FF:000004">
    <property type="entry name" value="Probable cytosol aminopeptidase"/>
    <property type="match status" value="1"/>
</dbReference>
<dbReference type="Gene3D" id="3.40.220.10">
    <property type="entry name" value="Leucine Aminopeptidase, subunit E, domain 1"/>
    <property type="match status" value="1"/>
</dbReference>
<dbReference type="Gene3D" id="3.40.630.10">
    <property type="entry name" value="Zn peptidases"/>
    <property type="match status" value="1"/>
</dbReference>
<dbReference type="HAMAP" id="MF_00181">
    <property type="entry name" value="Cytosol_peptidase_M17"/>
    <property type="match status" value="1"/>
</dbReference>
<dbReference type="InterPro" id="IPR011356">
    <property type="entry name" value="Leucine_aapep/pepB"/>
</dbReference>
<dbReference type="InterPro" id="IPR043472">
    <property type="entry name" value="Macro_dom-like"/>
</dbReference>
<dbReference type="InterPro" id="IPR000819">
    <property type="entry name" value="Peptidase_M17_C"/>
</dbReference>
<dbReference type="InterPro" id="IPR023042">
    <property type="entry name" value="Peptidase_M17_leu_NH2_pept"/>
</dbReference>
<dbReference type="InterPro" id="IPR008283">
    <property type="entry name" value="Peptidase_M17_N"/>
</dbReference>
<dbReference type="NCBIfam" id="NF002072">
    <property type="entry name" value="PRK00913.1-1"/>
    <property type="match status" value="1"/>
</dbReference>
<dbReference type="NCBIfam" id="NF002074">
    <property type="entry name" value="PRK00913.1-4"/>
    <property type="match status" value="1"/>
</dbReference>
<dbReference type="PANTHER" id="PTHR11963:SF23">
    <property type="entry name" value="CYTOSOL AMINOPEPTIDASE"/>
    <property type="match status" value="1"/>
</dbReference>
<dbReference type="PANTHER" id="PTHR11963">
    <property type="entry name" value="LEUCINE AMINOPEPTIDASE-RELATED"/>
    <property type="match status" value="1"/>
</dbReference>
<dbReference type="Pfam" id="PF00883">
    <property type="entry name" value="Peptidase_M17"/>
    <property type="match status" value="1"/>
</dbReference>
<dbReference type="Pfam" id="PF02789">
    <property type="entry name" value="Peptidase_M17_N"/>
    <property type="match status" value="1"/>
</dbReference>
<dbReference type="PRINTS" id="PR00481">
    <property type="entry name" value="LAMNOPPTDASE"/>
</dbReference>
<dbReference type="SUPFAM" id="SSF52949">
    <property type="entry name" value="Macro domain-like"/>
    <property type="match status" value="1"/>
</dbReference>
<dbReference type="SUPFAM" id="SSF53187">
    <property type="entry name" value="Zn-dependent exopeptidases"/>
    <property type="match status" value="1"/>
</dbReference>
<dbReference type="PROSITE" id="PS00631">
    <property type="entry name" value="CYTOSOL_AP"/>
    <property type="match status" value="1"/>
</dbReference>
<feature type="chain" id="PRO_0000165776" description="Probable cytosol aminopeptidase">
    <location>
        <begin position="1"/>
        <end position="506"/>
    </location>
</feature>
<feature type="active site" evidence="1">
    <location>
        <position position="282"/>
    </location>
</feature>
<feature type="active site" evidence="1">
    <location>
        <position position="356"/>
    </location>
</feature>
<feature type="binding site" evidence="1">
    <location>
        <position position="270"/>
    </location>
    <ligand>
        <name>Mn(2+)</name>
        <dbReference type="ChEBI" id="CHEBI:29035"/>
        <label>2</label>
    </ligand>
</feature>
<feature type="binding site" evidence="1">
    <location>
        <position position="275"/>
    </location>
    <ligand>
        <name>Mn(2+)</name>
        <dbReference type="ChEBI" id="CHEBI:29035"/>
        <label>1</label>
    </ligand>
</feature>
<feature type="binding site" evidence="1">
    <location>
        <position position="275"/>
    </location>
    <ligand>
        <name>Mn(2+)</name>
        <dbReference type="ChEBI" id="CHEBI:29035"/>
        <label>2</label>
    </ligand>
</feature>
<feature type="binding site" evidence="1">
    <location>
        <position position="293"/>
    </location>
    <ligand>
        <name>Mn(2+)</name>
        <dbReference type="ChEBI" id="CHEBI:29035"/>
        <label>2</label>
    </ligand>
</feature>
<feature type="binding site" evidence="1">
    <location>
        <position position="352"/>
    </location>
    <ligand>
        <name>Mn(2+)</name>
        <dbReference type="ChEBI" id="CHEBI:29035"/>
        <label>1</label>
    </ligand>
</feature>
<feature type="binding site" evidence="1">
    <location>
        <position position="354"/>
    </location>
    <ligand>
        <name>Mn(2+)</name>
        <dbReference type="ChEBI" id="CHEBI:29035"/>
        <label>1</label>
    </ligand>
</feature>
<feature type="binding site" evidence="1">
    <location>
        <position position="354"/>
    </location>
    <ligand>
        <name>Mn(2+)</name>
        <dbReference type="ChEBI" id="CHEBI:29035"/>
        <label>2</label>
    </ligand>
</feature>
<protein>
    <recommendedName>
        <fullName evidence="1">Probable cytosol aminopeptidase</fullName>
        <ecNumber evidence="1">3.4.11.1</ecNumber>
    </recommendedName>
    <alternativeName>
        <fullName evidence="1">Leucine aminopeptidase</fullName>
        <shortName evidence="1">LAP</shortName>
        <ecNumber evidence="1">3.4.11.10</ecNumber>
    </alternativeName>
    <alternativeName>
        <fullName evidence="1">Leucyl aminopeptidase</fullName>
    </alternativeName>
</protein>
<keyword id="KW-0031">Aminopeptidase</keyword>
<keyword id="KW-0963">Cytoplasm</keyword>
<keyword id="KW-0378">Hydrolase</keyword>
<keyword id="KW-0464">Manganese</keyword>
<keyword id="KW-0479">Metal-binding</keyword>
<keyword id="KW-0645">Protease</keyword>
<keyword id="KW-1185">Reference proteome</keyword>
<proteinExistence type="inferred from homology"/>
<reference key="1">
    <citation type="journal article" date="2003" name="Nat. Biotechnol.">
        <title>The genome sequence of the entomopathogenic bacterium Photorhabdus luminescens.</title>
        <authorList>
            <person name="Duchaud E."/>
            <person name="Rusniok C."/>
            <person name="Frangeul L."/>
            <person name="Buchrieser C."/>
            <person name="Givaudan A."/>
            <person name="Taourit S."/>
            <person name="Bocs S."/>
            <person name="Boursaux-Eude C."/>
            <person name="Chandler M."/>
            <person name="Charles J.-F."/>
            <person name="Dassa E."/>
            <person name="Derose R."/>
            <person name="Derzelle S."/>
            <person name="Freyssinet G."/>
            <person name="Gaudriault S."/>
            <person name="Medigue C."/>
            <person name="Lanois A."/>
            <person name="Powell K."/>
            <person name="Siguier P."/>
            <person name="Vincent R."/>
            <person name="Wingate V."/>
            <person name="Zouine M."/>
            <person name="Glaser P."/>
            <person name="Boemare N."/>
            <person name="Danchin A."/>
            <person name="Kunst F."/>
        </authorList>
    </citation>
    <scope>NUCLEOTIDE SEQUENCE [LARGE SCALE GENOMIC DNA]</scope>
    <source>
        <strain>DSM 15139 / CIP 105565 / TT01</strain>
    </source>
</reference>
<comment type="function">
    <text evidence="1">Presumably involved in the processing and regular turnover of intracellular proteins. Catalyzes the removal of unsubstituted N-terminal amino acids from various peptides.</text>
</comment>
<comment type="catalytic activity">
    <reaction evidence="1">
        <text>Release of an N-terminal amino acid, Xaa-|-Yaa-, in which Xaa is preferably Leu, but may be other amino acids including Pro although not Arg or Lys, and Yaa may be Pro. Amino acid amides and methyl esters are also readily hydrolyzed, but rates on arylamides are exceedingly low.</text>
        <dbReference type="EC" id="3.4.11.1"/>
    </reaction>
</comment>
<comment type="catalytic activity">
    <reaction evidence="1">
        <text>Release of an N-terminal amino acid, preferentially leucine, but not glutamic or aspartic acids.</text>
        <dbReference type="EC" id="3.4.11.10"/>
    </reaction>
</comment>
<comment type="cofactor">
    <cofactor evidence="1">
        <name>Mn(2+)</name>
        <dbReference type="ChEBI" id="CHEBI:29035"/>
    </cofactor>
    <text evidence="1">Binds 2 manganese ions per subunit.</text>
</comment>
<comment type="subcellular location">
    <subcellularLocation>
        <location evidence="1">Cytoplasm</location>
    </subcellularLocation>
</comment>
<comment type="similarity">
    <text evidence="1">Belongs to the peptidase M17 family.</text>
</comment>